<organism>
    <name type="scientific">Agrotis ipsilon</name>
    <name type="common">Black cutworm moth</name>
    <dbReference type="NCBI Taxonomy" id="56364"/>
    <lineage>
        <taxon>Eukaryota</taxon>
        <taxon>Metazoa</taxon>
        <taxon>Ecdysozoa</taxon>
        <taxon>Arthropoda</taxon>
        <taxon>Hexapoda</taxon>
        <taxon>Insecta</taxon>
        <taxon>Pterygota</taxon>
        <taxon>Neoptera</taxon>
        <taxon>Endopterygota</taxon>
        <taxon>Lepidoptera</taxon>
        <taxon>Glossata</taxon>
        <taxon>Ditrysia</taxon>
        <taxon>Noctuoidea</taxon>
        <taxon>Noctuidae</taxon>
        <taxon>Noctuinae</taxon>
        <taxon>Noctuini</taxon>
        <taxon>Agrotis</taxon>
    </lineage>
</organism>
<proteinExistence type="evidence at protein level"/>
<accession>C0HKT4</accession>
<sequence>MMWWALWCAVVVAAGSGVAAAPAPDSLSPLDMVQMDSSAPDDETLYAMSPMAARYSAGAPWLYLLADMPRDSQTGSGRVKRRMPSLSIDQPMSVLRQKLSQEMERKQQAFRAAVNRNFLNDIGKRGFQWTPSVQAVRYI</sequence>
<comment type="function">
    <molecule>Diuretic hormone 41</molecule>
    <text evidence="2">Regulation of fluid secretion.</text>
</comment>
<comment type="subcellular location">
    <subcellularLocation>
        <location evidence="6">Secreted</location>
    </subcellularLocation>
</comment>
<comment type="tissue specificity">
    <molecule>Diuretic hormone 41 precursor-related peptide</molecule>
    <text evidence="4">Expressed in corpora cardiaca (CC), corpora allata (CA), antennal lobe (AL) and gnathal ganglion (GNG) (at protein level). Expression in CC and CA detected in all animals, in GNG in most animals, expression in AL detected in few animals (at protein level).</text>
</comment>
<comment type="mass spectrometry">
    <molecule>Diuretic hormone 41 precursor-related peptide</molecule>
</comment>
<comment type="similarity">
    <text evidence="6">Belongs to the sauvagine/corticotropin-releasing factor/urotensin I family.</text>
</comment>
<keyword id="KW-0027">Amidation</keyword>
<keyword id="KW-0165">Cleavage on pair of basic residues</keyword>
<keyword id="KW-0903">Direct protein sequencing</keyword>
<keyword id="KW-0372">Hormone</keyword>
<keyword id="KW-0527">Neuropeptide</keyword>
<keyword id="KW-0964">Secreted</keyword>
<keyword id="KW-0732">Signal</keyword>
<protein>
    <recommendedName>
        <fullName evidence="5">Diuretic hormone 41</fullName>
    </recommendedName>
    <component>
        <recommendedName>
            <fullName evidence="5">Diuretic hormone 41 precursor-related peptide</fullName>
            <shortName evidence="5">DH(41)-PP</shortName>
            <shortName evidence="5">DH-41-PP</shortName>
        </recommendedName>
    </component>
</protein>
<feature type="signal peptide" evidence="3">
    <location>
        <begin position="1"/>
        <end position="20"/>
    </location>
</feature>
<feature type="propeptide" id="PRO_0000444526" evidence="6">
    <location>
        <begin position="21"/>
        <end position="79"/>
    </location>
</feature>
<feature type="peptide" id="PRO_0000444527" description="Diuretic hormone 41" evidence="2">
    <location>
        <begin position="82"/>
        <end position="122"/>
    </location>
</feature>
<feature type="peptide" id="PRO_0000444528" description="Diuretic hormone 41 precursor-related peptide" evidence="4">
    <location>
        <begin position="126"/>
        <end position="139"/>
    </location>
</feature>
<feature type="modified residue" description="Isoleucine amide" evidence="1">
    <location>
        <position position="122"/>
    </location>
</feature>
<name>DIH41_AGRIP</name>
<reference evidence="6" key="1">
    <citation type="journal article" date="2018" name="J. Proteome Res.">
        <title>Mating-induced differential peptidomics of neuropeptides and protein hormones in Agrotis ipsilon moths.</title>
        <authorList>
            <person name="Diesner M."/>
            <person name="Gallot A."/>
            <person name="Binz H."/>
            <person name="Gaertner C."/>
            <person name="Vitecek S."/>
            <person name="Kahnt J."/>
            <person name="Schachtner J."/>
            <person name="Jacquin-Joly E."/>
            <person name="Gadenne C."/>
        </authorList>
    </citation>
    <scope>NUCLEOTIDE SEQUENCE [MRNA]</scope>
    <scope>PROTEIN SEQUENCE OF 126-139</scope>
    <scope>TISSUE SPECIFICITY</scope>
    <scope>MASS SPECTROMETRY</scope>
    <scope>IDENTIFICATION BY MASS SPECTROMETRY</scope>
</reference>
<evidence type="ECO:0000250" key="1">
    <source>
        <dbReference type="UniProtKB" id="P21819"/>
    </source>
</evidence>
<evidence type="ECO:0000250" key="2">
    <source>
        <dbReference type="UniProtKB" id="P82014"/>
    </source>
</evidence>
<evidence type="ECO:0000255" key="3"/>
<evidence type="ECO:0000269" key="4">
    <source>
    </source>
</evidence>
<evidence type="ECO:0000303" key="5">
    <source>
    </source>
</evidence>
<evidence type="ECO:0000305" key="6"/>
<dbReference type="SMR" id="C0HKT4"/>
<dbReference type="GO" id="GO:0005576">
    <property type="term" value="C:extracellular region"/>
    <property type="evidence" value="ECO:0007669"/>
    <property type="project" value="UniProtKB-SubCell"/>
</dbReference>
<dbReference type="GO" id="GO:0005179">
    <property type="term" value="F:hormone activity"/>
    <property type="evidence" value="ECO:0007669"/>
    <property type="project" value="UniProtKB-KW"/>
</dbReference>
<dbReference type="GO" id="GO:0007218">
    <property type="term" value="P:neuropeptide signaling pathway"/>
    <property type="evidence" value="ECO:0007669"/>
    <property type="project" value="UniProtKB-KW"/>
</dbReference>
<dbReference type="InterPro" id="IPR018446">
    <property type="entry name" value="Corticotropin-releasing_fac_CS"/>
</dbReference>
<dbReference type="InterPro" id="IPR000187">
    <property type="entry name" value="CRF"/>
</dbReference>
<dbReference type="Pfam" id="PF00473">
    <property type="entry name" value="CRF"/>
    <property type="match status" value="1"/>
</dbReference>
<dbReference type="SMART" id="SM00039">
    <property type="entry name" value="CRF"/>
    <property type="match status" value="1"/>
</dbReference>
<dbReference type="PROSITE" id="PS00511">
    <property type="entry name" value="CRF"/>
    <property type="match status" value="1"/>
</dbReference>